<proteinExistence type="evidence at transcript level"/>
<organism>
    <name type="scientific">Rattus norvegicus</name>
    <name type="common">Rat</name>
    <dbReference type="NCBI Taxonomy" id="10116"/>
    <lineage>
        <taxon>Eukaryota</taxon>
        <taxon>Metazoa</taxon>
        <taxon>Chordata</taxon>
        <taxon>Craniata</taxon>
        <taxon>Vertebrata</taxon>
        <taxon>Euteleostomi</taxon>
        <taxon>Mammalia</taxon>
        <taxon>Eutheria</taxon>
        <taxon>Euarchontoglires</taxon>
        <taxon>Glires</taxon>
        <taxon>Rodentia</taxon>
        <taxon>Myomorpha</taxon>
        <taxon>Muroidea</taxon>
        <taxon>Muridae</taxon>
        <taxon>Murinae</taxon>
        <taxon>Rattus</taxon>
    </lineage>
</organism>
<dbReference type="EMBL" id="AJ289714">
    <property type="protein sequence ID" value="CAC27796.1"/>
    <property type="molecule type" value="mRNA"/>
</dbReference>
<dbReference type="EMBL" id="BC089099">
    <property type="protein sequence ID" value="AAH89099.1"/>
    <property type="molecule type" value="mRNA"/>
</dbReference>
<dbReference type="RefSeq" id="NP_598298.1">
    <property type="nucleotide sequence ID" value="NM_133614.3"/>
</dbReference>
<dbReference type="RefSeq" id="XP_006240176.1">
    <property type="nucleotide sequence ID" value="XM_006240114.3"/>
</dbReference>
<dbReference type="SMR" id="Q99JD3"/>
<dbReference type="FunCoup" id="Q99JD3">
    <property type="interactions" value="663"/>
</dbReference>
<dbReference type="STRING" id="10116.ENSRNOP00000037607"/>
<dbReference type="iPTMnet" id="Q99JD3"/>
<dbReference type="PhosphoSitePlus" id="Q99JD3"/>
<dbReference type="SwissPalm" id="Q99JD3"/>
<dbReference type="PaxDb" id="10116-ENSRNOP00000037607"/>
<dbReference type="Ensembl" id="ENSRNOT00000119506.1">
    <property type="protein sequence ID" value="ENSRNOP00000084175.1"/>
    <property type="gene ID" value="ENSRNOG00000008931.7"/>
</dbReference>
<dbReference type="GeneID" id="171151"/>
<dbReference type="KEGG" id="rno:171151"/>
<dbReference type="UCSC" id="RGD:621444">
    <property type="organism name" value="rat"/>
</dbReference>
<dbReference type="AGR" id="RGD:621444"/>
<dbReference type="CTD" id="89874"/>
<dbReference type="RGD" id="621444">
    <property type="gene designation" value="Slc25a21"/>
</dbReference>
<dbReference type="eggNOG" id="KOG0754">
    <property type="taxonomic scope" value="Eukaryota"/>
</dbReference>
<dbReference type="GeneTree" id="ENSGT00730000111119"/>
<dbReference type="HOGENOM" id="CLU_015166_5_2_1"/>
<dbReference type="InParanoid" id="Q99JD3"/>
<dbReference type="OrthoDB" id="61720at9989"/>
<dbReference type="PhylomeDB" id="Q99JD3"/>
<dbReference type="Reactome" id="R-RNO-71064">
    <property type="pathway name" value="Lysine catabolism"/>
</dbReference>
<dbReference type="PRO" id="PR:Q99JD3"/>
<dbReference type="Proteomes" id="UP000002494">
    <property type="component" value="Chromosome 6"/>
</dbReference>
<dbReference type="GO" id="GO:0005743">
    <property type="term" value="C:mitochondrial inner membrane"/>
    <property type="evidence" value="ECO:0007669"/>
    <property type="project" value="UniProtKB-SubCell"/>
</dbReference>
<dbReference type="GO" id="GO:0015139">
    <property type="term" value="F:alpha-ketoglutarate transmembrane transporter activity"/>
    <property type="evidence" value="ECO:0000266"/>
    <property type="project" value="RGD"/>
</dbReference>
<dbReference type="GO" id="GO:0015297">
    <property type="term" value="F:antiporter activity"/>
    <property type="evidence" value="ECO:0007669"/>
    <property type="project" value="UniProtKB-KW"/>
</dbReference>
<dbReference type="GO" id="GO:0006869">
    <property type="term" value="P:lipid transport"/>
    <property type="evidence" value="ECO:0007669"/>
    <property type="project" value="UniProtKB-KW"/>
</dbReference>
<dbReference type="GO" id="GO:1990550">
    <property type="term" value="P:mitochondrial alpha-ketoglutarate transmembrane transport"/>
    <property type="evidence" value="ECO:0000266"/>
    <property type="project" value="RGD"/>
</dbReference>
<dbReference type="FunFam" id="1.50.40.10:FF:000048">
    <property type="entry name" value="mitochondrial 2-oxodicarboxylate carrier isoform X2"/>
    <property type="match status" value="1"/>
</dbReference>
<dbReference type="Gene3D" id="1.50.40.10">
    <property type="entry name" value="Mitochondrial carrier domain"/>
    <property type="match status" value="2"/>
</dbReference>
<dbReference type="InterPro" id="IPR051752">
    <property type="entry name" value="Mito_2-oxodicarb_carrier"/>
</dbReference>
<dbReference type="InterPro" id="IPR018108">
    <property type="entry name" value="Mitochondrial_sb/sol_carrier"/>
</dbReference>
<dbReference type="InterPro" id="IPR023395">
    <property type="entry name" value="Mt_carrier_dom_sf"/>
</dbReference>
<dbReference type="PANTHER" id="PTHR46356">
    <property type="entry name" value="MITOCHONDRIAL 2-OXODICARBOXYLATE CARRIER"/>
    <property type="match status" value="1"/>
</dbReference>
<dbReference type="PANTHER" id="PTHR46356:SF1">
    <property type="entry name" value="MITOCHONDRIAL 2-OXODICARBOXYLATE CARRIER"/>
    <property type="match status" value="1"/>
</dbReference>
<dbReference type="Pfam" id="PF00153">
    <property type="entry name" value="Mito_carr"/>
    <property type="match status" value="3"/>
</dbReference>
<dbReference type="SUPFAM" id="SSF103506">
    <property type="entry name" value="Mitochondrial carrier"/>
    <property type="match status" value="1"/>
</dbReference>
<dbReference type="PROSITE" id="PS50920">
    <property type="entry name" value="SOLCAR"/>
    <property type="match status" value="3"/>
</dbReference>
<name>ODC_RAT</name>
<accession>Q99JD3</accession>
<feature type="chain" id="PRO_0000090647" description="Mitochondrial 2-oxodicarboxylate carrier">
    <location>
        <begin position="1"/>
        <end position="298"/>
    </location>
</feature>
<feature type="transmembrane region" description="Helical; Name=1" evidence="3">
    <location>
        <begin position="16"/>
        <end position="36"/>
    </location>
</feature>
<feature type="transmembrane region" description="Helical; Name=2" evidence="3">
    <location>
        <begin position="69"/>
        <end position="88"/>
    </location>
</feature>
<feature type="transmembrane region" description="Helical; Name=3" evidence="3">
    <location>
        <begin position="112"/>
        <end position="132"/>
    </location>
</feature>
<feature type="transmembrane region" description="Helical; Name=4" evidence="3">
    <location>
        <begin position="166"/>
        <end position="186"/>
    </location>
</feature>
<feature type="transmembrane region" description="Helical; Name=5" evidence="3">
    <location>
        <begin position="204"/>
        <end position="224"/>
    </location>
</feature>
<feature type="transmembrane region" description="Helical; Name=6" evidence="3">
    <location>
        <begin position="276"/>
        <end position="296"/>
    </location>
</feature>
<feature type="repeat" description="Solcar 1">
    <location>
        <begin position="10"/>
        <end position="99"/>
    </location>
</feature>
<feature type="repeat" description="Solcar 2">
    <location>
        <begin position="106"/>
        <end position="195"/>
    </location>
</feature>
<feature type="repeat" description="Solcar 3">
    <location>
        <begin position="204"/>
        <end position="293"/>
    </location>
</feature>
<keyword id="KW-0050">Antiport</keyword>
<keyword id="KW-0445">Lipid transport</keyword>
<keyword id="KW-0472">Membrane</keyword>
<keyword id="KW-0496">Mitochondrion</keyword>
<keyword id="KW-0999">Mitochondrion inner membrane</keyword>
<keyword id="KW-1185">Reference proteome</keyword>
<keyword id="KW-0677">Repeat</keyword>
<keyword id="KW-0812">Transmembrane</keyword>
<keyword id="KW-1133">Transmembrane helix</keyword>
<keyword id="KW-0813">Transport</keyword>
<sequence length="298" mass="33279">MSASNVSLLHETCRQVAAGGCAGLVEICLMHPLDVVKTRFQVQRSVTDPQSYKSLRDSFQVIFRTEGLFGFYKGIIPPILAETPKRAVKFSTFELYKKFLGYMSLSPGLTFPIAGLGSGLTEAVVVNPFEVVKVGLQVNRNMFTEQPSTFAYARQIIKKEGWGFQGLNKGFTATLGRHGIFNMTYFGFYYNVKDNIPSSKDPTLEFLRKFGIGFVSGTVGSVFNIPFDVAKSRIQGPQPVPGEIKYRGCFKTMETVYREEGILALYKGLLPKVMRLGPGGGVMLLVYEYTYAWLQENW</sequence>
<protein>
    <recommendedName>
        <fullName>Mitochondrial 2-oxodicarboxylate carrier</fullName>
    </recommendedName>
    <alternativeName>
        <fullName>Solute carrier family 25 member 21</fullName>
    </alternativeName>
</protein>
<reference key="1">
    <citation type="journal article" date="2001" name="J. Biol. Chem.">
        <title>Identification of the human mitochondrial oxodicarboxylate carrier. Bacterial expression, reconstitution, functional characterization, tissue distribution and chromosomal location.</title>
        <authorList>
            <person name="Fiermonte G."/>
            <person name="Dolce V."/>
            <person name="Palmieri L."/>
            <person name="Ventura M."/>
            <person name="Runswick M.J."/>
            <person name="Palmieri F."/>
            <person name="Walker J.E."/>
        </authorList>
    </citation>
    <scope>NUCLEOTIDE SEQUENCE [MRNA]</scope>
    <scope>TISSUE SPECIFICITY</scope>
</reference>
<reference key="2">
    <citation type="journal article" date="2004" name="Genome Res.">
        <title>The status, quality, and expansion of the NIH full-length cDNA project: the Mammalian Gene Collection (MGC).</title>
        <authorList>
            <consortium name="The MGC Project Team"/>
        </authorList>
    </citation>
    <scope>NUCLEOTIDE SEQUENCE [LARGE SCALE MRNA]</scope>
    <source>
        <tissue>Ovary</tissue>
    </source>
</reference>
<comment type="function">
    <text evidence="2">Transports dicarboxylates across the inner membranes of mitochondria by a counter-exchange mechanism. Can transport 2-oxoadipate (2-oxohexanedioate), 2-oxoglutarate, adipate (hexanedioate), glutarate, and to a lesser extent, pimelate (heptanedioate), 2-oxopimelate (2-oxoheptanedioate), 2-aminoadipate (2-aminohexanedioate), oxaloacetate, and citrate. Plays a central role in catabolism of lysine, hydroxylysine, and tryptophan, by transporting common metabolite intermediates (such as 2-oxoadipate) into the mitochondria, where it is converted into acetyl-CoA and can enter the citric acid (TCA) cycle.</text>
</comment>
<comment type="catalytic activity">
    <reaction evidence="2">
        <text>2-oxoadipate(in) + 2-oxoglutarate(out) = 2-oxoadipate(out) + 2-oxoglutarate(in)</text>
        <dbReference type="Rhea" id="RHEA:71739"/>
        <dbReference type="ChEBI" id="CHEBI:16810"/>
        <dbReference type="ChEBI" id="CHEBI:57499"/>
    </reaction>
</comment>
<comment type="catalytic activity">
    <reaction evidence="2">
        <text>hexanedioate(in) + 2-oxoglutarate(out) = hexanedioate(out) + 2-oxoglutarate(in)</text>
        <dbReference type="Rhea" id="RHEA:71743"/>
        <dbReference type="ChEBI" id="CHEBI:16810"/>
        <dbReference type="ChEBI" id="CHEBI:17128"/>
    </reaction>
</comment>
<comment type="catalytic activity">
    <reaction evidence="2">
        <text>L-2-aminoadipate(in) + 2-oxoglutarate(out) = L-2-aminoadipate(out) + 2-oxoglutarate(in)</text>
        <dbReference type="Rhea" id="RHEA:71747"/>
        <dbReference type="ChEBI" id="CHEBI:16810"/>
        <dbReference type="ChEBI" id="CHEBI:58672"/>
    </reaction>
</comment>
<comment type="catalytic activity">
    <reaction evidence="2">
        <text>glutarate(in) + 2-oxoglutarate(out) = glutarate(out) + 2-oxoglutarate(in)</text>
        <dbReference type="Rhea" id="RHEA:71751"/>
        <dbReference type="ChEBI" id="CHEBI:16810"/>
        <dbReference type="ChEBI" id="CHEBI:30921"/>
    </reaction>
</comment>
<comment type="catalytic activity">
    <reaction evidence="2">
        <text>2-oxoheptanedioate(in) + 2-oxoglutarate(out) = 2-oxoheptanedioate(out) + 2-oxoglutarate(in)</text>
        <dbReference type="Rhea" id="RHEA:71755"/>
        <dbReference type="ChEBI" id="CHEBI:16810"/>
        <dbReference type="ChEBI" id="CHEBI:72701"/>
    </reaction>
</comment>
<comment type="catalytic activity">
    <reaction evidence="2">
        <text>heptanedioate(in) + 2-oxoglutarate(out) = heptanedioate(out) + 2-oxoglutarate(in)</text>
        <dbReference type="Rhea" id="RHEA:71759"/>
        <dbReference type="ChEBI" id="CHEBI:16810"/>
        <dbReference type="ChEBI" id="CHEBI:36165"/>
    </reaction>
</comment>
<comment type="catalytic activity">
    <reaction evidence="2">
        <text>citrate(in) + 2-oxoglutarate(out) = citrate(out) + 2-oxoglutarate(in)</text>
        <dbReference type="Rhea" id="RHEA:71763"/>
        <dbReference type="ChEBI" id="CHEBI:16810"/>
        <dbReference type="ChEBI" id="CHEBI:16947"/>
    </reaction>
</comment>
<comment type="subcellular location">
    <subcellularLocation>
        <location evidence="1">Mitochondrion inner membrane</location>
        <topology evidence="1">Multi-pass membrane protein</topology>
    </subcellularLocation>
</comment>
<comment type="tissue specificity">
    <text evidence="4">Widely expressed.</text>
</comment>
<comment type="similarity">
    <text evidence="5">Belongs to the mitochondrial carrier (TC 2.A.29) family.</text>
</comment>
<gene>
    <name type="primary">Slc25a21</name>
    <name type="synonym">Odc</name>
</gene>
<evidence type="ECO:0000250" key="1"/>
<evidence type="ECO:0000250" key="2">
    <source>
        <dbReference type="UniProtKB" id="Q9BQT8"/>
    </source>
</evidence>
<evidence type="ECO:0000255" key="3"/>
<evidence type="ECO:0000269" key="4">
    <source>
    </source>
</evidence>
<evidence type="ECO:0000305" key="5"/>